<organism>
    <name type="scientific">Arabidopsis thaliana</name>
    <name type="common">Mouse-ear cress</name>
    <dbReference type="NCBI Taxonomy" id="3702"/>
    <lineage>
        <taxon>Eukaryota</taxon>
        <taxon>Viridiplantae</taxon>
        <taxon>Streptophyta</taxon>
        <taxon>Embryophyta</taxon>
        <taxon>Tracheophyta</taxon>
        <taxon>Spermatophyta</taxon>
        <taxon>Magnoliopsida</taxon>
        <taxon>eudicotyledons</taxon>
        <taxon>Gunneridae</taxon>
        <taxon>Pentapetalae</taxon>
        <taxon>rosids</taxon>
        <taxon>malvids</taxon>
        <taxon>Brassicales</taxon>
        <taxon>Brassicaceae</taxon>
        <taxon>Camelineae</taxon>
        <taxon>Arabidopsis</taxon>
    </lineage>
</organism>
<sequence length="411" mass="46049">MKEKAESGGGVGYVRADQIDLKSLDEQLQRHLSKAWTMEKRKSLSDGEDNVNNTRHNQNNFGHRQLVFQRPLLGGGYSNNNNSSKNDIIRSTEVEKSRREWEIDPSKLIIKSVIARGTFGTVHRGIYDGQDVAVKLLDWGEEGHRSDAEIASLRAAFTQEVAVWHKLDHPNVTKFIGAAMGTSEMSIQTENGQMGMPSNVCCVVVEYCPGGALKSFLIKTRRRKLAFKVVIQLSLDLARGLSYLHSQKIVHRDVKTENMLLDKSRTLKIADFGVARLEASNPNDMTGETGTLGYMAPEVLNGSPYNRKCDVYSFGICLWEIYCCDMPYPDLSFSEVTSAVVRQNLRPEIPRCCPSSLANVMKRCWDANPEKRPEMEEVVAMLEAIDTSKGGGMIPPDQQQGCFCFRRHRGP</sequence>
<reference key="1">
    <citation type="journal article" date="2000" name="Nature">
        <title>Sequence and analysis of chromosome 3 of the plant Arabidopsis thaliana.</title>
        <authorList>
            <person name="Salanoubat M."/>
            <person name="Lemcke K."/>
            <person name="Rieger M."/>
            <person name="Ansorge W."/>
            <person name="Unseld M."/>
            <person name="Fartmann B."/>
            <person name="Valle G."/>
            <person name="Bloecker H."/>
            <person name="Perez-Alonso M."/>
            <person name="Obermaier B."/>
            <person name="Delseny M."/>
            <person name="Boutry M."/>
            <person name="Grivell L.A."/>
            <person name="Mache R."/>
            <person name="Puigdomenech P."/>
            <person name="De Simone V."/>
            <person name="Choisne N."/>
            <person name="Artiguenave F."/>
            <person name="Robert C."/>
            <person name="Brottier P."/>
            <person name="Wincker P."/>
            <person name="Cattolico L."/>
            <person name="Weissenbach J."/>
            <person name="Saurin W."/>
            <person name="Quetier F."/>
            <person name="Schaefer M."/>
            <person name="Mueller-Auer S."/>
            <person name="Gabel C."/>
            <person name="Fuchs M."/>
            <person name="Benes V."/>
            <person name="Wurmbach E."/>
            <person name="Drzonek H."/>
            <person name="Erfle H."/>
            <person name="Jordan N."/>
            <person name="Bangert S."/>
            <person name="Wiedelmann R."/>
            <person name="Kranz H."/>
            <person name="Voss H."/>
            <person name="Holland R."/>
            <person name="Brandt P."/>
            <person name="Nyakatura G."/>
            <person name="Vezzi A."/>
            <person name="D'Angelo M."/>
            <person name="Pallavicini A."/>
            <person name="Toppo S."/>
            <person name="Simionati B."/>
            <person name="Conrad A."/>
            <person name="Hornischer K."/>
            <person name="Kauer G."/>
            <person name="Loehnert T.-H."/>
            <person name="Nordsiek G."/>
            <person name="Reichelt J."/>
            <person name="Scharfe M."/>
            <person name="Schoen O."/>
            <person name="Bargues M."/>
            <person name="Terol J."/>
            <person name="Climent J."/>
            <person name="Navarro P."/>
            <person name="Collado C."/>
            <person name="Perez-Perez A."/>
            <person name="Ottenwaelder B."/>
            <person name="Duchemin D."/>
            <person name="Cooke R."/>
            <person name="Laudie M."/>
            <person name="Berger-Llauro C."/>
            <person name="Purnelle B."/>
            <person name="Masuy D."/>
            <person name="de Haan M."/>
            <person name="Maarse A.C."/>
            <person name="Alcaraz J.-P."/>
            <person name="Cottet A."/>
            <person name="Casacuberta E."/>
            <person name="Monfort A."/>
            <person name="Argiriou A."/>
            <person name="Flores M."/>
            <person name="Liguori R."/>
            <person name="Vitale D."/>
            <person name="Mannhaupt G."/>
            <person name="Haase D."/>
            <person name="Schoof H."/>
            <person name="Rudd S."/>
            <person name="Zaccaria P."/>
            <person name="Mewes H.-W."/>
            <person name="Mayer K.F.X."/>
            <person name="Kaul S."/>
            <person name="Town C.D."/>
            <person name="Koo H.L."/>
            <person name="Tallon L.J."/>
            <person name="Jenkins J."/>
            <person name="Rooney T."/>
            <person name="Rizzo M."/>
            <person name="Walts A."/>
            <person name="Utterback T."/>
            <person name="Fujii C.Y."/>
            <person name="Shea T.P."/>
            <person name="Creasy T.H."/>
            <person name="Haas B."/>
            <person name="Maiti R."/>
            <person name="Wu D."/>
            <person name="Peterson J."/>
            <person name="Van Aken S."/>
            <person name="Pai G."/>
            <person name="Militscher J."/>
            <person name="Sellers P."/>
            <person name="Gill J.E."/>
            <person name="Feldblyum T.V."/>
            <person name="Preuss D."/>
            <person name="Lin X."/>
            <person name="Nierman W.C."/>
            <person name="Salzberg S.L."/>
            <person name="White O."/>
            <person name="Venter J.C."/>
            <person name="Fraser C.M."/>
            <person name="Kaneko T."/>
            <person name="Nakamura Y."/>
            <person name="Sato S."/>
            <person name="Kato T."/>
            <person name="Asamizu E."/>
            <person name="Sasamoto S."/>
            <person name="Kimura T."/>
            <person name="Idesawa K."/>
            <person name="Kawashima K."/>
            <person name="Kishida Y."/>
            <person name="Kiyokawa C."/>
            <person name="Kohara M."/>
            <person name="Matsumoto M."/>
            <person name="Matsuno A."/>
            <person name="Muraki A."/>
            <person name="Nakayama S."/>
            <person name="Nakazaki N."/>
            <person name="Shinpo S."/>
            <person name="Takeuchi C."/>
            <person name="Wada T."/>
            <person name="Watanabe A."/>
            <person name="Yamada M."/>
            <person name="Yasuda M."/>
            <person name="Tabata S."/>
        </authorList>
    </citation>
    <scope>NUCLEOTIDE SEQUENCE [LARGE SCALE GENOMIC DNA]</scope>
    <source>
        <strain>cv. Columbia</strain>
    </source>
</reference>
<reference key="2">
    <citation type="journal article" date="2017" name="Plant J.">
        <title>Araport11: a complete reannotation of the Arabidopsis thaliana reference genome.</title>
        <authorList>
            <person name="Cheng C.Y."/>
            <person name="Krishnakumar V."/>
            <person name="Chan A.P."/>
            <person name="Thibaud-Nissen F."/>
            <person name="Schobel S."/>
            <person name="Town C.D."/>
        </authorList>
    </citation>
    <scope>GENOME REANNOTATION</scope>
    <source>
        <strain>cv. Columbia</strain>
    </source>
</reference>
<reference key="3">
    <citation type="journal article" date="2003" name="Science">
        <title>Empirical analysis of transcriptional activity in the Arabidopsis genome.</title>
        <authorList>
            <person name="Yamada K."/>
            <person name="Lim J."/>
            <person name="Dale J.M."/>
            <person name="Chen H."/>
            <person name="Shinn P."/>
            <person name="Palm C.J."/>
            <person name="Southwick A.M."/>
            <person name="Wu H.C."/>
            <person name="Kim C.J."/>
            <person name="Nguyen M."/>
            <person name="Pham P.K."/>
            <person name="Cheuk R.F."/>
            <person name="Karlin-Newmann G."/>
            <person name="Liu S.X."/>
            <person name="Lam B."/>
            <person name="Sakano H."/>
            <person name="Wu T."/>
            <person name="Yu G."/>
            <person name="Miranda M."/>
            <person name="Quach H.L."/>
            <person name="Tripp M."/>
            <person name="Chang C.H."/>
            <person name="Lee J.M."/>
            <person name="Toriumi M.J."/>
            <person name="Chan M.M."/>
            <person name="Tang C.C."/>
            <person name="Onodera C.S."/>
            <person name="Deng J.M."/>
            <person name="Akiyama K."/>
            <person name="Ansari Y."/>
            <person name="Arakawa T."/>
            <person name="Banh J."/>
            <person name="Banno F."/>
            <person name="Bowser L."/>
            <person name="Brooks S.Y."/>
            <person name="Carninci P."/>
            <person name="Chao Q."/>
            <person name="Choy N."/>
            <person name="Enju A."/>
            <person name="Goldsmith A.D."/>
            <person name="Gurjal M."/>
            <person name="Hansen N.F."/>
            <person name="Hayashizaki Y."/>
            <person name="Johnson-Hopson C."/>
            <person name="Hsuan V.W."/>
            <person name="Iida K."/>
            <person name="Karnes M."/>
            <person name="Khan S."/>
            <person name="Koesema E."/>
            <person name="Ishida J."/>
            <person name="Jiang P.X."/>
            <person name="Jones T."/>
            <person name="Kawai J."/>
            <person name="Kamiya A."/>
            <person name="Meyers C."/>
            <person name="Nakajima M."/>
            <person name="Narusaka M."/>
            <person name="Seki M."/>
            <person name="Sakurai T."/>
            <person name="Satou M."/>
            <person name="Tamse R."/>
            <person name="Vaysberg M."/>
            <person name="Wallender E.K."/>
            <person name="Wong C."/>
            <person name="Yamamura Y."/>
            <person name="Yuan S."/>
            <person name="Shinozaki K."/>
            <person name="Davis R.W."/>
            <person name="Theologis A."/>
            <person name="Ecker J.R."/>
        </authorList>
    </citation>
    <scope>NUCLEOTIDE SEQUENCE [LARGE SCALE MRNA]</scope>
    <source>
        <strain>cv. Columbia</strain>
    </source>
</reference>
<reference key="4">
    <citation type="submission" date="2006-07" db="EMBL/GenBank/DDBJ databases">
        <title>Large-scale analysis of RIKEN Arabidopsis full-length (RAFL) cDNAs.</title>
        <authorList>
            <person name="Totoki Y."/>
            <person name="Seki M."/>
            <person name="Ishida J."/>
            <person name="Nakajima M."/>
            <person name="Enju A."/>
            <person name="Kamiya A."/>
            <person name="Narusaka M."/>
            <person name="Shin-i T."/>
            <person name="Nakagawa M."/>
            <person name="Sakamoto N."/>
            <person name="Oishi K."/>
            <person name="Kohara Y."/>
            <person name="Kobayashi M."/>
            <person name="Toyoda A."/>
            <person name="Sakaki Y."/>
            <person name="Sakurai T."/>
            <person name="Iida K."/>
            <person name="Akiyama K."/>
            <person name="Satou M."/>
            <person name="Toyoda T."/>
            <person name="Konagaya A."/>
            <person name="Carninci P."/>
            <person name="Kawai J."/>
            <person name="Hayashizaki Y."/>
            <person name="Shinozaki K."/>
        </authorList>
    </citation>
    <scope>NUCLEOTIDE SEQUENCE [LARGE SCALE MRNA]</scope>
    <source>
        <strain>cv. Columbia</strain>
    </source>
</reference>
<reference key="5">
    <citation type="journal article" date="2002" name="Trends Plant Sci.">
        <title>Mitogen-activated protein kinase cascades in plants: a new nomenclature.</title>
        <authorList>
            <consortium name="MAPK group"/>
        </authorList>
    </citation>
    <scope>GENE FAMILY</scope>
</reference>
<reference key="6">
    <citation type="journal article" date="2006" name="Plant Mol. Biol.">
        <title>Genome-wide analysis and experimentation of plant serine/threonine/tyrosine-specific protein kinases.</title>
        <authorList>
            <person name="Rudrabhatla P."/>
            <person name="Reddy M.M."/>
            <person name="Rajasekharan R."/>
        </authorList>
    </citation>
    <scope>GENE FAMILY</scope>
    <scope>NOMENCLATURE</scope>
</reference>
<reference key="7">
    <citation type="journal article" date="2017" name="Nat. Commun.">
        <title>Blue light and CO2 signals converge to regulate light-induced stomatal opening.</title>
        <authorList>
            <person name="Hiyama A."/>
            <person name="Takemiya A."/>
            <person name="Munemasa S."/>
            <person name="Okuma E."/>
            <person name="Sugiyama N."/>
            <person name="Tada Y."/>
            <person name="Murata Y."/>
            <person name="Shimazaki K.-I."/>
        </authorList>
    </citation>
    <scope>FUNCTION</scope>
    <scope>DISRUPTION PHENOTYPE</scope>
    <scope>MUTAGENESIS OF SER-43; SER-45 AND ASP-271</scope>
    <scope>INTERACTION WITH CBC2</scope>
    <scope>AUTOPHOSPHORYLATION</scope>
    <scope>CATALYTIC ACTIVITY</scope>
    <scope>PHOSPHORYLATION AT SER-43 AND SER-45</scope>
    <scope>PHOSPHORYLATION BY HT1 AND PHOT1</scope>
    <scope>IDENTIFICATION BY MASS SPECTROMETRY</scope>
    <scope>TISSUE SPECIFICITY</scope>
    <scope>SUBCELLULAR LOCATION</scope>
</reference>
<reference key="8">
    <citation type="journal article" date="2020" name="Photochem. Photobiol. Sci.">
        <title>Raf-like kinases CBC1 and CBC2 negatively regulate stomatal opening by negatively regulating plasma membrane H+-ATPase phosphorylation in Arabidopsis.</title>
        <authorList>
            <person name="Hayashi M."/>
            <person name="Sugimoto H."/>
            <person name="Takahashi H."/>
            <person name="Seki M."/>
            <person name="Shinozaki K."/>
            <person name="Sawasaki T."/>
            <person name="Kinoshita T."/>
            <person name="Inoue S.-I."/>
        </authorList>
    </citation>
    <scope>FUNCTION</scope>
    <scope>DISRUPTION PHENOTYPE</scope>
    <scope>INTERACTION WITH PHOT2; BLUS1 AND AHA1</scope>
    <scope>TISSUE SPECIFICITY</scope>
    <scope>SUBCELLULAR LOCATION</scope>
    <source>
        <strain>cv. Columbia</strain>
    </source>
</reference>
<keyword id="KW-0067">ATP-binding</keyword>
<keyword id="KW-0963">Cytoplasm</keyword>
<keyword id="KW-0418">Kinase</keyword>
<keyword id="KW-0547">Nucleotide-binding</keyword>
<keyword id="KW-0597">Phosphoprotein</keyword>
<keyword id="KW-1185">Reference proteome</keyword>
<keyword id="KW-0723">Serine/threonine-protein kinase</keyword>
<keyword id="KW-0808">Transferase</keyword>
<keyword id="KW-0829">Tyrosine-protein kinase</keyword>
<dbReference type="EC" id="2.7.11.1" evidence="3"/>
<dbReference type="EMBL" id="AC009325">
    <property type="protein sequence ID" value="AAF01534.1"/>
    <property type="molecule type" value="Genomic_DNA"/>
</dbReference>
<dbReference type="EMBL" id="CP002686">
    <property type="protein sequence ID" value="AEE73674.1"/>
    <property type="molecule type" value="Genomic_DNA"/>
</dbReference>
<dbReference type="EMBL" id="AY057647">
    <property type="protein sequence ID" value="AAL15278.1"/>
    <property type="molecule type" value="mRNA"/>
</dbReference>
<dbReference type="EMBL" id="AY136392">
    <property type="protein sequence ID" value="AAM97058.1"/>
    <property type="molecule type" value="mRNA"/>
</dbReference>
<dbReference type="EMBL" id="BT000206">
    <property type="protein sequence ID" value="AAN15525.1"/>
    <property type="molecule type" value="mRNA"/>
</dbReference>
<dbReference type="EMBL" id="AK227129">
    <property type="protein sequence ID" value="BAE99178.1"/>
    <property type="molecule type" value="mRNA"/>
</dbReference>
<dbReference type="RefSeq" id="NP_186798.1">
    <property type="nucleotide sequence ID" value="NM_111015.3"/>
</dbReference>
<dbReference type="SMR" id="Q9SSA4"/>
<dbReference type="FunCoup" id="Q9SSA4">
    <property type="interactions" value="133"/>
</dbReference>
<dbReference type="STRING" id="3702.AT3G01490.1"/>
<dbReference type="iPTMnet" id="Q9SSA4"/>
<dbReference type="PaxDb" id="3702-AT3G01490.1"/>
<dbReference type="ProteomicsDB" id="185199"/>
<dbReference type="EnsemblPlants" id="AT3G01490.1">
    <property type="protein sequence ID" value="AT3G01490.1"/>
    <property type="gene ID" value="AT3G01490"/>
</dbReference>
<dbReference type="GeneID" id="821136"/>
<dbReference type="Gramene" id="AT3G01490.1">
    <property type="protein sequence ID" value="AT3G01490.1"/>
    <property type="gene ID" value="AT3G01490"/>
</dbReference>
<dbReference type="Araport" id="AT3G01490"/>
<dbReference type="TAIR" id="AT3G01490">
    <property type="gene designation" value="CBC1"/>
</dbReference>
<dbReference type="eggNOG" id="KOG0192">
    <property type="taxonomic scope" value="Eukaryota"/>
</dbReference>
<dbReference type="HOGENOM" id="CLU_000288_7_35_1"/>
<dbReference type="OMA" id="QTDNGQV"/>
<dbReference type="OrthoDB" id="4062651at2759"/>
<dbReference type="Proteomes" id="UP000006548">
    <property type="component" value="Chromosome 3"/>
</dbReference>
<dbReference type="ExpressionAtlas" id="Q9SSA4">
    <property type="expression patterns" value="baseline and differential"/>
</dbReference>
<dbReference type="GO" id="GO:0005737">
    <property type="term" value="C:cytoplasm"/>
    <property type="evidence" value="ECO:0000314"/>
    <property type="project" value="UniProtKB"/>
</dbReference>
<dbReference type="GO" id="GO:0005829">
    <property type="term" value="C:cytosol"/>
    <property type="evidence" value="ECO:0000314"/>
    <property type="project" value="UniProtKB"/>
</dbReference>
<dbReference type="GO" id="GO:0005524">
    <property type="term" value="F:ATP binding"/>
    <property type="evidence" value="ECO:0007669"/>
    <property type="project" value="UniProtKB-KW"/>
</dbReference>
<dbReference type="GO" id="GO:0004674">
    <property type="term" value="F:protein serine/threonine kinase activity"/>
    <property type="evidence" value="ECO:0000315"/>
    <property type="project" value="UniProtKB"/>
</dbReference>
<dbReference type="GO" id="GO:0004712">
    <property type="term" value="F:protein serine/threonine/tyrosine kinase activity"/>
    <property type="evidence" value="ECO:0000250"/>
    <property type="project" value="TAIR"/>
</dbReference>
<dbReference type="GO" id="GO:0004713">
    <property type="term" value="F:protein tyrosine kinase activity"/>
    <property type="evidence" value="ECO:0007669"/>
    <property type="project" value="UniProtKB-KW"/>
</dbReference>
<dbReference type="GO" id="GO:0071244">
    <property type="term" value="P:cellular response to carbon dioxide"/>
    <property type="evidence" value="ECO:0000315"/>
    <property type="project" value="UniProtKB"/>
</dbReference>
<dbReference type="GO" id="GO:1902456">
    <property type="term" value="P:regulation of stomatal opening"/>
    <property type="evidence" value="ECO:0000315"/>
    <property type="project" value="UniProtKB"/>
</dbReference>
<dbReference type="GO" id="GO:0009637">
    <property type="term" value="P:response to blue light"/>
    <property type="evidence" value="ECO:0000315"/>
    <property type="project" value="UniProtKB"/>
</dbReference>
<dbReference type="GO" id="GO:0010114">
    <property type="term" value="P:response to red light"/>
    <property type="evidence" value="ECO:0000315"/>
    <property type="project" value="UniProtKB"/>
</dbReference>
<dbReference type="GO" id="GO:0001659">
    <property type="term" value="P:temperature homeostasis"/>
    <property type="evidence" value="ECO:0000315"/>
    <property type="project" value="UniProtKB"/>
</dbReference>
<dbReference type="CDD" id="cd13999">
    <property type="entry name" value="STKc_MAP3K-like"/>
    <property type="match status" value="1"/>
</dbReference>
<dbReference type="FunFam" id="3.30.200.20:FF:000034">
    <property type="entry name" value="Kinase suppressor of Ras 1"/>
    <property type="match status" value="1"/>
</dbReference>
<dbReference type="FunFam" id="1.10.510.10:FF:000310">
    <property type="entry name" value="Serine/threonine-protein kinase HT1"/>
    <property type="match status" value="1"/>
</dbReference>
<dbReference type="Gene3D" id="3.30.200.20">
    <property type="entry name" value="Phosphorylase Kinase, domain 1"/>
    <property type="match status" value="1"/>
</dbReference>
<dbReference type="Gene3D" id="1.10.510.10">
    <property type="entry name" value="Transferase(Phosphotransferase) domain 1"/>
    <property type="match status" value="1"/>
</dbReference>
<dbReference type="InterPro" id="IPR011009">
    <property type="entry name" value="Kinase-like_dom_sf"/>
</dbReference>
<dbReference type="InterPro" id="IPR000719">
    <property type="entry name" value="Prot_kinase_dom"/>
</dbReference>
<dbReference type="InterPro" id="IPR001245">
    <property type="entry name" value="Ser-Thr/Tyr_kinase_cat_dom"/>
</dbReference>
<dbReference type="InterPro" id="IPR008271">
    <property type="entry name" value="Ser/Thr_kinase_AS"/>
</dbReference>
<dbReference type="InterPro" id="IPR051681">
    <property type="entry name" value="Ser/Thr_Kinases-Pseudokinases"/>
</dbReference>
<dbReference type="PANTHER" id="PTHR44329:SF160">
    <property type="entry name" value="OS05G0577700 PROTEIN"/>
    <property type="match status" value="1"/>
</dbReference>
<dbReference type="PANTHER" id="PTHR44329">
    <property type="entry name" value="SERINE/THREONINE-PROTEIN KINASE TNNI3K-RELATED"/>
    <property type="match status" value="1"/>
</dbReference>
<dbReference type="Pfam" id="PF07714">
    <property type="entry name" value="PK_Tyr_Ser-Thr"/>
    <property type="match status" value="1"/>
</dbReference>
<dbReference type="PRINTS" id="PR00109">
    <property type="entry name" value="TYRKINASE"/>
</dbReference>
<dbReference type="SMART" id="SM00220">
    <property type="entry name" value="S_TKc"/>
    <property type="match status" value="1"/>
</dbReference>
<dbReference type="SUPFAM" id="SSF56112">
    <property type="entry name" value="Protein kinase-like (PK-like)"/>
    <property type="match status" value="1"/>
</dbReference>
<dbReference type="PROSITE" id="PS50011">
    <property type="entry name" value="PROTEIN_KINASE_DOM"/>
    <property type="match status" value="1"/>
</dbReference>
<dbReference type="PROSITE" id="PS00108">
    <property type="entry name" value="PROTEIN_KINASE_ST"/>
    <property type="match status" value="1"/>
</dbReference>
<comment type="function">
    <text evidence="3 4">Serine/threonine protein kinase that phosphorylates proteins on serine and threonine residues (PubMed:29101334). Collectively with CBC2, acts as a negative regulator of stomatal opening, probably via the inhibition of plasma membrane-type ATPases (AHA1 and AHA2) activity in guard cells, but in an abscisic acid (ABA)-independent manner (PubMed:31904040). However, at low concentrations of CO(2), together with CBC2, stimulates stomatal opening via the inhibition of S-type anion channels in response to blue light (BL) and red light (RL), thus being a key component to maximize photosynthesis in the light under low CO(2) conditions (PubMed:29101334, PubMed:31904040). Required for temperature decrease in leaves (PubMed:29101334). Downstream target of HIGH LEAF TEMPERATURE1 (HT1) during low CO(2)-induced stomatal opening (PubMed:29101334). Also functions in the signaling pathways of phototropins (PubMed:29101334).</text>
</comment>
<comment type="catalytic activity">
    <reaction evidence="3">
        <text>L-seryl-[protein] + ATP = O-phospho-L-seryl-[protein] + ADP + H(+)</text>
        <dbReference type="Rhea" id="RHEA:17989"/>
        <dbReference type="Rhea" id="RHEA-COMP:9863"/>
        <dbReference type="Rhea" id="RHEA-COMP:11604"/>
        <dbReference type="ChEBI" id="CHEBI:15378"/>
        <dbReference type="ChEBI" id="CHEBI:29999"/>
        <dbReference type="ChEBI" id="CHEBI:30616"/>
        <dbReference type="ChEBI" id="CHEBI:83421"/>
        <dbReference type="ChEBI" id="CHEBI:456216"/>
        <dbReference type="EC" id="2.7.11.1"/>
    </reaction>
</comment>
<comment type="catalytic activity">
    <reaction evidence="3">
        <text>L-threonyl-[protein] + ATP = O-phospho-L-threonyl-[protein] + ADP + H(+)</text>
        <dbReference type="Rhea" id="RHEA:46608"/>
        <dbReference type="Rhea" id="RHEA-COMP:11060"/>
        <dbReference type="Rhea" id="RHEA-COMP:11605"/>
        <dbReference type="ChEBI" id="CHEBI:15378"/>
        <dbReference type="ChEBI" id="CHEBI:30013"/>
        <dbReference type="ChEBI" id="CHEBI:30616"/>
        <dbReference type="ChEBI" id="CHEBI:61977"/>
        <dbReference type="ChEBI" id="CHEBI:456216"/>
        <dbReference type="EC" id="2.7.11.1"/>
    </reaction>
</comment>
<comment type="subunit">
    <text evidence="3 4">Binds to CBC2 (PubMed:29101334). Associates with PHOT2, BLUS1 and PM H(+)-ATPase (e.g. AHA1) (PubMed:31904040).</text>
</comment>
<comment type="subcellular location">
    <subcellularLocation>
        <location evidence="3 4">Cytoplasm</location>
        <location evidence="3 4">Cytosol</location>
    </subcellularLocation>
</comment>
<comment type="tissue specificity">
    <text evidence="3 4">Expressed in guard cells.</text>
</comment>
<comment type="PTM">
    <text evidence="3">Autophosphorylated (PubMed:29101334). Phosphorylated in guard cells by HT1 in response to low CO(2) concentrations and by PHOT1 after blue light (BL) exposure (PubMed:29101334).</text>
</comment>
<comment type="disruption phenotype">
    <text evidence="3 4">The double mutant cbc1 cbc2 exhibits a reduced voltage-dependent inward-rectifying K(+) current and suppressed low CO(2), red and blue light-induced stomatal opening leading to a severely impaired temperature decrease (PubMed:29101334). Larger stomatal opening under both dark and blue light conditions in cbc1 cbc2 plants, and associated with increased phosphorylation of C-terminal Thr in plasma membrane-type ATPases (AHA1 and AHA2) in guard cells (PubMed:31904040). Altered CO(2)-triggered stomatal closure (PubMed:29101334).</text>
</comment>
<comment type="similarity">
    <text evidence="2">Belongs to the protein kinase superfamily. Ser/Thr protein kinase family.</text>
</comment>
<gene>
    <name evidence="6" type="primary">CBC1</name>
    <name evidence="5" type="synonym">STY54</name>
    <name evidence="7" type="ordered locus">At3g01490</name>
    <name evidence="8" type="ORF">F4P13.4</name>
</gene>
<protein>
    <recommendedName>
        <fullName evidence="5">Serine/threonine-protein kinase 54</fullName>
        <ecNumber evidence="3">2.7.11.1</ecNumber>
    </recommendedName>
    <alternativeName>
        <fullName evidence="6">Protein CONVERGENCE OF BLUE LIGHT AND CO2 1</fullName>
    </alternativeName>
</protein>
<proteinExistence type="evidence at protein level"/>
<accession>Q9SSA4</accession>
<accession>A0A178VC75</accession>
<name>CBC1_ARATH</name>
<evidence type="ECO:0000250" key="1">
    <source>
        <dbReference type="UniProtKB" id="O22558"/>
    </source>
</evidence>
<evidence type="ECO:0000255" key="2">
    <source>
        <dbReference type="PROSITE-ProRule" id="PRU00159"/>
    </source>
</evidence>
<evidence type="ECO:0000269" key="3">
    <source>
    </source>
</evidence>
<evidence type="ECO:0000269" key="4">
    <source>
    </source>
</evidence>
<evidence type="ECO:0000303" key="5">
    <source>
    </source>
</evidence>
<evidence type="ECO:0000303" key="6">
    <source>
    </source>
</evidence>
<evidence type="ECO:0000312" key="7">
    <source>
        <dbReference type="Araport" id="AT3G01490"/>
    </source>
</evidence>
<evidence type="ECO:0000312" key="8">
    <source>
        <dbReference type="EMBL" id="AAF01534.1"/>
    </source>
</evidence>
<feature type="chain" id="PRO_0000459726" description="Serine/threonine-protein kinase 54">
    <location>
        <begin position="1"/>
        <end position="411"/>
    </location>
</feature>
<feature type="domain" description="Protein kinase" evidence="2">
    <location>
        <begin position="108"/>
        <end position="385"/>
    </location>
</feature>
<feature type="active site" description="Proton acceptor" evidence="2">
    <location>
        <position position="253"/>
    </location>
</feature>
<feature type="binding site" evidence="2">
    <location>
        <begin position="114"/>
        <end position="122"/>
    </location>
    <ligand>
        <name>ATP</name>
        <dbReference type="ChEBI" id="CHEBI:30616"/>
    </ligand>
</feature>
<feature type="binding site" evidence="2">
    <location>
        <position position="135"/>
    </location>
    <ligand>
        <name>ATP</name>
        <dbReference type="ChEBI" id="CHEBI:30616"/>
    </ligand>
</feature>
<feature type="modified residue" description="Phosphoserine; by PHOT1" evidence="3">
    <location>
        <position position="43"/>
    </location>
</feature>
<feature type="modified residue" description="Phosphoserine; by PHOT1" evidence="3">
    <location>
        <position position="45"/>
    </location>
</feature>
<feature type="modified residue" description="Phosphothreonine" evidence="1">
    <location>
        <position position="286"/>
    </location>
</feature>
<feature type="mutagenesis site" description="Lost phosphorylation by PHOT1 but not by HT1." evidence="3">
    <original>S</original>
    <variation>A</variation>
    <location>
        <position position="43"/>
    </location>
</feature>
<feature type="mutagenesis site" description="Lost phosphorylation by PHOT1 but not by HT1." evidence="3">
    <original>S</original>
    <variation>A</variation>
    <location>
        <position position="45"/>
    </location>
</feature>
<feature type="mutagenesis site" description="Lost kinase activity and impaired autophosphorylation." evidence="3">
    <original>D</original>
    <variation>N</variation>
    <location>
        <position position="271"/>
    </location>
</feature>